<reference key="1">
    <citation type="journal article" date="2009" name="PLoS ONE">
        <title>Salmonella paratyphi C: genetic divergence from Salmonella choleraesuis and pathogenic convergence with Salmonella typhi.</title>
        <authorList>
            <person name="Liu W.-Q."/>
            <person name="Feng Y."/>
            <person name="Wang Y."/>
            <person name="Zou Q.-H."/>
            <person name="Chen F."/>
            <person name="Guo J.-T."/>
            <person name="Peng Y.-H."/>
            <person name="Jin Y."/>
            <person name="Li Y.-G."/>
            <person name="Hu S.-N."/>
            <person name="Johnston R.N."/>
            <person name="Liu G.-R."/>
            <person name="Liu S.-L."/>
        </authorList>
    </citation>
    <scope>NUCLEOTIDE SEQUENCE [LARGE SCALE GENOMIC DNA]</scope>
    <source>
        <strain>RKS4594</strain>
    </source>
</reference>
<comment type="function">
    <text evidence="1">Necessary for formate dehydrogenase activity.</text>
</comment>
<comment type="subcellular location">
    <subcellularLocation>
        <location evidence="1">Cytoplasm</location>
    </subcellularLocation>
</comment>
<comment type="similarity">
    <text evidence="1">Belongs to the FdhE family.</text>
</comment>
<keyword id="KW-0963">Cytoplasm</keyword>
<proteinExistence type="inferred from homology"/>
<feature type="chain" id="PRO_1000147171" description="Protein FdhE">
    <location>
        <begin position="1"/>
        <end position="309"/>
    </location>
</feature>
<organism>
    <name type="scientific">Salmonella paratyphi C (strain RKS4594)</name>
    <dbReference type="NCBI Taxonomy" id="476213"/>
    <lineage>
        <taxon>Bacteria</taxon>
        <taxon>Pseudomonadati</taxon>
        <taxon>Pseudomonadota</taxon>
        <taxon>Gammaproteobacteria</taxon>
        <taxon>Enterobacterales</taxon>
        <taxon>Enterobacteriaceae</taxon>
        <taxon>Salmonella</taxon>
    </lineage>
</organism>
<dbReference type="EMBL" id="CP000857">
    <property type="protein sequence ID" value="ACN48202.1"/>
    <property type="molecule type" value="Genomic_DNA"/>
</dbReference>
<dbReference type="RefSeq" id="WP_000027730.1">
    <property type="nucleotide sequence ID" value="NC_012125.1"/>
</dbReference>
<dbReference type="SMR" id="C0Q3K0"/>
<dbReference type="KEGG" id="sei:SPC_4137"/>
<dbReference type="HOGENOM" id="CLU_055275_0_0_6"/>
<dbReference type="Proteomes" id="UP000001599">
    <property type="component" value="Chromosome"/>
</dbReference>
<dbReference type="GO" id="GO:0005829">
    <property type="term" value="C:cytosol"/>
    <property type="evidence" value="ECO:0007669"/>
    <property type="project" value="TreeGrafter"/>
</dbReference>
<dbReference type="GO" id="GO:0008199">
    <property type="term" value="F:ferric iron binding"/>
    <property type="evidence" value="ECO:0007669"/>
    <property type="project" value="TreeGrafter"/>
</dbReference>
<dbReference type="GO" id="GO:0051604">
    <property type="term" value="P:protein maturation"/>
    <property type="evidence" value="ECO:0007669"/>
    <property type="project" value="TreeGrafter"/>
</dbReference>
<dbReference type="CDD" id="cd16341">
    <property type="entry name" value="FdhE"/>
    <property type="match status" value="1"/>
</dbReference>
<dbReference type="FunFam" id="3.90.1670.10:FF:000001">
    <property type="entry name" value="Protein FdhE"/>
    <property type="match status" value="1"/>
</dbReference>
<dbReference type="Gene3D" id="3.90.1670.10">
    <property type="entry name" value="FdhE-like domain"/>
    <property type="match status" value="1"/>
</dbReference>
<dbReference type="HAMAP" id="MF_00611">
    <property type="entry name" value="FdeH"/>
    <property type="match status" value="1"/>
</dbReference>
<dbReference type="InterPro" id="IPR024064">
    <property type="entry name" value="FdhE-like_sf"/>
</dbReference>
<dbReference type="InterPro" id="IPR056796">
    <property type="entry name" value="FdhE_C"/>
</dbReference>
<dbReference type="InterPro" id="IPR056797">
    <property type="entry name" value="FdhE_central"/>
</dbReference>
<dbReference type="InterPro" id="IPR056774">
    <property type="entry name" value="FdhE_N"/>
</dbReference>
<dbReference type="InterPro" id="IPR006452">
    <property type="entry name" value="Formate_DH_accessory"/>
</dbReference>
<dbReference type="NCBIfam" id="TIGR01562">
    <property type="entry name" value="FdhE"/>
    <property type="match status" value="1"/>
</dbReference>
<dbReference type="NCBIfam" id="NF002925">
    <property type="entry name" value="PRK03564.1"/>
    <property type="match status" value="1"/>
</dbReference>
<dbReference type="PANTHER" id="PTHR37689">
    <property type="entry name" value="PROTEIN FDHE"/>
    <property type="match status" value="1"/>
</dbReference>
<dbReference type="PANTHER" id="PTHR37689:SF1">
    <property type="entry name" value="PROTEIN FDHE"/>
    <property type="match status" value="1"/>
</dbReference>
<dbReference type="Pfam" id="PF24860">
    <property type="entry name" value="FdhE_C"/>
    <property type="match status" value="1"/>
</dbReference>
<dbReference type="Pfam" id="PF24859">
    <property type="entry name" value="FdhE_central"/>
    <property type="match status" value="1"/>
</dbReference>
<dbReference type="Pfam" id="PF04216">
    <property type="entry name" value="FdhE_N"/>
    <property type="match status" value="1"/>
</dbReference>
<dbReference type="PIRSF" id="PIRSF018296">
    <property type="entry name" value="Format_dh_formtn"/>
    <property type="match status" value="1"/>
</dbReference>
<dbReference type="SUPFAM" id="SSF144020">
    <property type="entry name" value="FdhE-like"/>
    <property type="match status" value="1"/>
</dbReference>
<sequence length="309" mass="34706">MSIRIIPQDELGSSEKRTADMIPPLLFPRLKNVYNRRAERLRELAENNPLGDYLRFAALIAHAQEVVLYDHPLEMDLTARIKEANDQGKPPLDIHVLPRDKHWQKLLHSLIAELKPEMSGPALAVIENLEKASEQELEQMASALFASDFASVSSDKAPFIWAALSLYWAQMASLIPGKARAEYGEARQYCPVCGSMPVSSMVQIGTTQGLRYLHCNLCETEWHVVRVKCSNCEQSRDLHYWSLENEQAAVKAESCGDCGTYLKILYQEKDPKVEAVADDLASLVLDARMEQEGFARSSINPFLFPGEGE</sequence>
<evidence type="ECO:0000255" key="1">
    <source>
        <dbReference type="HAMAP-Rule" id="MF_00611"/>
    </source>
</evidence>
<name>FDHE_SALPC</name>
<accession>C0Q3K0</accession>
<protein>
    <recommendedName>
        <fullName evidence="1">Protein FdhE</fullName>
    </recommendedName>
</protein>
<gene>
    <name evidence="1" type="primary">fdhE</name>
    <name type="ordered locus">SPC_4137</name>
</gene>